<proteinExistence type="inferred from homology"/>
<reference key="1">
    <citation type="submission" date="2008-06" db="EMBL/GenBank/DDBJ databases">
        <title>Complete sequence of Pelodictyon phaeoclathratiforme BU-1.</title>
        <authorList>
            <consortium name="US DOE Joint Genome Institute"/>
            <person name="Lucas S."/>
            <person name="Copeland A."/>
            <person name="Lapidus A."/>
            <person name="Glavina del Rio T."/>
            <person name="Dalin E."/>
            <person name="Tice H."/>
            <person name="Bruce D."/>
            <person name="Goodwin L."/>
            <person name="Pitluck S."/>
            <person name="Schmutz J."/>
            <person name="Larimer F."/>
            <person name="Land M."/>
            <person name="Hauser L."/>
            <person name="Kyrpides N."/>
            <person name="Mikhailova N."/>
            <person name="Liu Z."/>
            <person name="Li T."/>
            <person name="Zhao F."/>
            <person name="Overmann J."/>
            <person name="Bryant D.A."/>
            <person name="Richardson P."/>
        </authorList>
    </citation>
    <scope>NUCLEOTIDE SEQUENCE [LARGE SCALE GENOMIC DNA]</scope>
    <source>
        <strain>DSM 5477 / BU-1</strain>
    </source>
</reference>
<dbReference type="EC" id="2.7.8.13" evidence="1"/>
<dbReference type="EMBL" id="CP001110">
    <property type="protein sequence ID" value="ACF45040.1"/>
    <property type="molecule type" value="Genomic_DNA"/>
</dbReference>
<dbReference type="RefSeq" id="WP_012509508.1">
    <property type="nucleotide sequence ID" value="NC_011060.1"/>
</dbReference>
<dbReference type="SMR" id="B4SHE7"/>
<dbReference type="STRING" id="324925.Ppha_2897"/>
<dbReference type="KEGG" id="pph:Ppha_2897"/>
<dbReference type="eggNOG" id="COG0472">
    <property type="taxonomic scope" value="Bacteria"/>
</dbReference>
<dbReference type="HOGENOM" id="CLU_023982_0_0_10"/>
<dbReference type="OrthoDB" id="9805475at2"/>
<dbReference type="UniPathway" id="UPA00219"/>
<dbReference type="Proteomes" id="UP000002724">
    <property type="component" value="Chromosome"/>
</dbReference>
<dbReference type="GO" id="GO:0005886">
    <property type="term" value="C:plasma membrane"/>
    <property type="evidence" value="ECO:0007669"/>
    <property type="project" value="UniProtKB-SubCell"/>
</dbReference>
<dbReference type="GO" id="GO:0046872">
    <property type="term" value="F:metal ion binding"/>
    <property type="evidence" value="ECO:0007669"/>
    <property type="project" value="UniProtKB-KW"/>
</dbReference>
<dbReference type="GO" id="GO:0008963">
    <property type="term" value="F:phospho-N-acetylmuramoyl-pentapeptide-transferase activity"/>
    <property type="evidence" value="ECO:0007669"/>
    <property type="project" value="UniProtKB-UniRule"/>
</dbReference>
<dbReference type="GO" id="GO:0051992">
    <property type="term" value="F:UDP-N-acetylmuramoyl-L-alanyl-D-glutamyl-meso-2,6-diaminopimelyl-D-alanyl-D-alanine:undecaprenyl-phosphate transferase activity"/>
    <property type="evidence" value="ECO:0007669"/>
    <property type="project" value="RHEA"/>
</dbReference>
<dbReference type="GO" id="GO:0051301">
    <property type="term" value="P:cell division"/>
    <property type="evidence" value="ECO:0007669"/>
    <property type="project" value="UniProtKB-KW"/>
</dbReference>
<dbReference type="GO" id="GO:0071555">
    <property type="term" value="P:cell wall organization"/>
    <property type="evidence" value="ECO:0007669"/>
    <property type="project" value="UniProtKB-KW"/>
</dbReference>
<dbReference type="GO" id="GO:0009252">
    <property type="term" value="P:peptidoglycan biosynthetic process"/>
    <property type="evidence" value="ECO:0007669"/>
    <property type="project" value="UniProtKB-UniRule"/>
</dbReference>
<dbReference type="GO" id="GO:0008360">
    <property type="term" value="P:regulation of cell shape"/>
    <property type="evidence" value="ECO:0007669"/>
    <property type="project" value="UniProtKB-KW"/>
</dbReference>
<dbReference type="CDD" id="cd06852">
    <property type="entry name" value="GT_MraY"/>
    <property type="match status" value="1"/>
</dbReference>
<dbReference type="HAMAP" id="MF_00038">
    <property type="entry name" value="MraY"/>
    <property type="match status" value="1"/>
</dbReference>
<dbReference type="InterPro" id="IPR000715">
    <property type="entry name" value="Glycosyl_transferase_4"/>
</dbReference>
<dbReference type="InterPro" id="IPR003524">
    <property type="entry name" value="PNAcMuramoyl-5peptid_Trfase"/>
</dbReference>
<dbReference type="InterPro" id="IPR018480">
    <property type="entry name" value="PNAcMuramoyl-5peptid_Trfase_CS"/>
</dbReference>
<dbReference type="NCBIfam" id="TIGR00445">
    <property type="entry name" value="mraY"/>
    <property type="match status" value="1"/>
</dbReference>
<dbReference type="PANTHER" id="PTHR22926">
    <property type="entry name" value="PHOSPHO-N-ACETYLMURAMOYL-PENTAPEPTIDE-TRANSFERASE"/>
    <property type="match status" value="1"/>
</dbReference>
<dbReference type="PANTHER" id="PTHR22926:SF5">
    <property type="entry name" value="PHOSPHO-N-ACETYLMURAMOYL-PENTAPEPTIDE-TRANSFERASE HOMOLOG"/>
    <property type="match status" value="1"/>
</dbReference>
<dbReference type="Pfam" id="PF00953">
    <property type="entry name" value="Glycos_transf_4"/>
    <property type="match status" value="1"/>
</dbReference>
<dbReference type="PROSITE" id="PS01348">
    <property type="entry name" value="MRAY_2"/>
    <property type="match status" value="1"/>
</dbReference>
<accession>B4SHE7</accession>
<name>MRAY_PELPB</name>
<protein>
    <recommendedName>
        <fullName evidence="1">Phospho-N-acetylmuramoyl-pentapeptide-transferase</fullName>
        <ecNumber evidence="1">2.7.8.13</ecNumber>
    </recommendedName>
    <alternativeName>
        <fullName evidence="1">UDP-MurNAc-pentapeptide phosphotransferase</fullName>
    </alternativeName>
</protein>
<keyword id="KW-0131">Cell cycle</keyword>
<keyword id="KW-0132">Cell division</keyword>
<keyword id="KW-0997">Cell inner membrane</keyword>
<keyword id="KW-1003">Cell membrane</keyword>
<keyword id="KW-0133">Cell shape</keyword>
<keyword id="KW-0961">Cell wall biogenesis/degradation</keyword>
<keyword id="KW-0460">Magnesium</keyword>
<keyword id="KW-0472">Membrane</keyword>
<keyword id="KW-0479">Metal-binding</keyword>
<keyword id="KW-0573">Peptidoglycan synthesis</keyword>
<keyword id="KW-1185">Reference proteome</keyword>
<keyword id="KW-0808">Transferase</keyword>
<keyword id="KW-0812">Transmembrane</keyword>
<keyword id="KW-1133">Transmembrane helix</keyword>
<evidence type="ECO:0000255" key="1">
    <source>
        <dbReference type="HAMAP-Rule" id="MF_00038"/>
    </source>
</evidence>
<organism>
    <name type="scientific">Pelodictyon phaeoclathratiforme (strain DSM 5477 / BU-1)</name>
    <dbReference type="NCBI Taxonomy" id="324925"/>
    <lineage>
        <taxon>Bacteria</taxon>
        <taxon>Pseudomonadati</taxon>
        <taxon>Chlorobiota</taxon>
        <taxon>Chlorobiia</taxon>
        <taxon>Chlorobiales</taxon>
        <taxon>Chlorobiaceae</taxon>
        <taxon>Chlorobium/Pelodictyon group</taxon>
        <taxon>Pelodictyon</taxon>
    </lineage>
</organism>
<gene>
    <name evidence="1" type="primary">mraY</name>
    <name type="ordered locus">Ppha_2897</name>
</gene>
<comment type="function">
    <text evidence="1">Catalyzes the initial step of the lipid cycle reactions in the biosynthesis of the cell wall peptidoglycan: transfers peptidoglycan precursor phospho-MurNAc-pentapeptide from UDP-MurNAc-pentapeptide onto the lipid carrier undecaprenyl phosphate, yielding undecaprenyl-pyrophosphoryl-MurNAc-pentapeptide, known as lipid I.</text>
</comment>
<comment type="catalytic activity">
    <reaction evidence="1">
        <text>UDP-N-acetyl-alpha-D-muramoyl-L-alanyl-gamma-D-glutamyl-meso-2,6-diaminopimeloyl-D-alanyl-D-alanine + di-trans,octa-cis-undecaprenyl phosphate = di-trans,octa-cis-undecaprenyl diphospho-N-acetyl-alpha-D-muramoyl-L-alanyl-D-glutamyl-meso-2,6-diaminopimeloyl-D-alanyl-D-alanine + UMP</text>
        <dbReference type="Rhea" id="RHEA:28386"/>
        <dbReference type="ChEBI" id="CHEBI:57865"/>
        <dbReference type="ChEBI" id="CHEBI:60392"/>
        <dbReference type="ChEBI" id="CHEBI:61386"/>
        <dbReference type="ChEBI" id="CHEBI:61387"/>
        <dbReference type="EC" id="2.7.8.13"/>
    </reaction>
</comment>
<comment type="cofactor">
    <cofactor evidence="1">
        <name>Mg(2+)</name>
        <dbReference type="ChEBI" id="CHEBI:18420"/>
    </cofactor>
</comment>
<comment type="pathway">
    <text evidence="1">Cell wall biogenesis; peptidoglycan biosynthesis.</text>
</comment>
<comment type="subcellular location">
    <subcellularLocation>
        <location evidence="1">Cell inner membrane</location>
        <topology evidence="1">Multi-pass membrane protein</topology>
    </subcellularLocation>
</comment>
<comment type="similarity">
    <text evidence="1">Belongs to the glycosyltransferase 4 family. MraY subfamily.</text>
</comment>
<feature type="chain" id="PRO_1000090653" description="Phospho-N-acetylmuramoyl-pentapeptide-transferase">
    <location>
        <begin position="1"/>
        <end position="368"/>
    </location>
</feature>
<feature type="transmembrane region" description="Helical" evidence="1">
    <location>
        <begin position="30"/>
        <end position="50"/>
    </location>
</feature>
<feature type="transmembrane region" description="Helical" evidence="1">
    <location>
        <begin position="72"/>
        <end position="92"/>
    </location>
</feature>
<feature type="transmembrane region" description="Helical" evidence="1">
    <location>
        <begin position="95"/>
        <end position="115"/>
    </location>
</feature>
<feature type="transmembrane region" description="Helical" evidence="1">
    <location>
        <begin position="139"/>
        <end position="159"/>
    </location>
</feature>
<feature type="transmembrane region" description="Helical" evidence="1">
    <location>
        <begin position="169"/>
        <end position="189"/>
    </location>
</feature>
<feature type="transmembrane region" description="Helical" evidence="1">
    <location>
        <begin position="208"/>
        <end position="228"/>
    </location>
</feature>
<feature type="transmembrane region" description="Helical" evidence="1">
    <location>
        <begin position="238"/>
        <end position="258"/>
    </location>
</feature>
<feature type="transmembrane region" description="Helical" evidence="1">
    <location>
        <begin position="264"/>
        <end position="286"/>
    </location>
</feature>
<feature type="transmembrane region" description="Helical" evidence="1">
    <location>
        <begin position="345"/>
        <end position="365"/>
    </location>
</feature>
<sequence>MIYYLLRYINDLFDLPGLHVIEYLTFRASAAAITALLITLFVGPGFIKYLKTRFIEPVKEEAPPEHKKKNKLPTMGGLLIIFSIEISVLLWSKFIDPHVWLIMLAILWMGIIGFIDDYRKVVLKIKGGLSARYKLIGQVTLGLVVGCYTWYDPSFSVLLSTTTVPFFKYLTIDYGYFYIPIVIFIITAVSNAVNLTDGLDGLAAGSSAIVVMGLGGFSYLAGNAVYAVYLNIPFIPGGGEIAVVSMAIVMACVGFLWFNSNPAEIIMGDTGSLALGSAIAVIALLIKQELLLPLIAGIFFLETLSVSLQVLYFKYTKMRYGQGKRIFLMAPLHHHFQLKGWAEQKIVIRFWILTILFFLASLMTLKLR</sequence>